<comment type="function">
    <text evidence="1">Located on the platform of the 30S subunit, it bridges several disparate RNA helices of the 16S rRNA. Forms part of the Shine-Dalgarno cleft in the 70S ribosome.</text>
</comment>
<comment type="subunit">
    <text evidence="1">Part of the 30S ribosomal subunit. Interacts with proteins S7 and S18. Binds to IF-3.</text>
</comment>
<comment type="similarity">
    <text evidence="1">Belongs to the universal ribosomal protein uS11 family.</text>
</comment>
<feature type="chain" id="PRO_0000230409" description="Small ribosomal subunit protein uS11">
    <location>
        <begin position="1"/>
        <end position="131"/>
    </location>
</feature>
<organism>
    <name type="scientific">Neisseria gonorrhoeae (strain ATCC 700825 / FA 1090)</name>
    <dbReference type="NCBI Taxonomy" id="242231"/>
    <lineage>
        <taxon>Bacteria</taxon>
        <taxon>Pseudomonadati</taxon>
        <taxon>Pseudomonadota</taxon>
        <taxon>Betaproteobacteria</taxon>
        <taxon>Neisseriales</taxon>
        <taxon>Neisseriaceae</taxon>
        <taxon>Neisseria</taxon>
    </lineage>
</organism>
<evidence type="ECO:0000255" key="1">
    <source>
        <dbReference type="HAMAP-Rule" id="MF_01310"/>
    </source>
</evidence>
<evidence type="ECO:0000305" key="2"/>
<keyword id="KW-1185">Reference proteome</keyword>
<keyword id="KW-0687">Ribonucleoprotein</keyword>
<keyword id="KW-0689">Ribosomal protein</keyword>
<keyword id="KW-0694">RNA-binding</keyword>
<keyword id="KW-0699">rRNA-binding</keyword>
<proteinExistence type="inferred from homology"/>
<name>RS11_NEIG1</name>
<gene>
    <name evidence="1" type="primary">rpsK</name>
    <name type="ordered locus">NGO_1820</name>
</gene>
<accession>Q5F5V0</accession>
<reference key="1">
    <citation type="submission" date="2003-03" db="EMBL/GenBank/DDBJ databases">
        <title>The complete genome sequence of Neisseria gonorrhoeae.</title>
        <authorList>
            <person name="Lewis L.A."/>
            <person name="Gillaspy A.F."/>
            <person name="McLaughlin R.E."/>
            <person name="Gipson M."/>
            <person name="Ducey T.F."/>
            <person name="Ownbey T."/>
            <person name="Hartman K."/>
            <person name="Nydick C."/>
            <person name="Carson M.B."/>
            <person name="Vaughn J."/>
            <person name="Thomson C."/>
            <person name="Song L."/>
            <person name="Lin S."/>
            <person name="Yuan X."/>
            <person name="Najar F."/>
            <person name="Zhan M."/>
            <person name="Ren Q."/>
            <person name="Zhu H."/>
            <person name="Qi S."/>
            <person name="Kenton S.M."/>
            <person name="Lai H."/>
            <person name="White J.D."/>
            <person name="Clifton S."/>
            <person name="Roe B.A."/>
            <person name="Dyer D.W."/>
        </authorList>
    </citation>
    <scope>NUCLEOTIDE SEQUENCE [LARGE SCALE GENOMIC DNA]</scope>
    <source>
        <strain>ATCC 700825 / FA 1090</strain>
    </source>
</reference>
<sequence length="131" mass="13919">MAKANTASRVRKKVRKTVSEGIVHVHASFNNTIITITDRQGNALSWATSGGAGFKGSRKSTPFAAQVAAEAAGKVAQEYGVKNLEVRIKGPGPGRESSVRALNALGFKITSITDVTPLPHNGCRPPKKRRI</sequence>
<dbReference type="EMBL" id="AE004969">
    <property type="protein sequence ID" value="AAW90437.1"/>
    <property type="molecule type" value="Genomic_DNA"/>
</dbReference>
<dbReference type="RefSeq" id="WP_002216249.1">
    <property type="nucleotide sequence ID" value="NC_002946.2"/>
</dbReference>
<dbReference type="RefSeq" id="YP_208849.1">
    <property type="nucleotide sequence ID" value="NC_002946.2"/>
</dbReference>
<dbReference type="SMR" id="Q5F5V0"/>
<dbReference type="STRING" id="242231.NGO_1820"/>
<dbReference type="GeneID" id="94582061"/>
<dbReference type="KEGG" id="ngo:NGO_1820"/>
<dbReference type="PATRIC" id="fig|242231.10.peg.2185"/>
<dbReference type="HOGENOM" id="CLU_072439_5_0_4"/>
<dbReference type="PRO" id="PR:Q5F5V0"/>
<dbReference type="Proteomes" id="UP000000535">
    <property type="component" value="Chromosome"/>
</dbReference>
<dbReference type="GO" id="GO:1990904">
    <property type="term" value="C:ribonucleoprotein complex"/>
    <property type="evidence" value="ECO:0007669"/>
    <property type="project" value="UniProtKB-KW"/>
</dbReference>
<dbReference type="GO" id="GO:0005840">
    <property type="term" value="C:ribosome"/>
    <property type="evidence" value="ECO:0007669"/>
    <property type="project" value="UniProtKB-KW"/>
</dbReference>
<dbReference type="GO" id="GO:0019843">
    <property type="term" value="F:rRNA binding"/>
    <property type="evidence" value="ECO:0007669"/>
    <property type="project" value="UniProtKB-UniRule"/>
</dbReference>
<dbReference type="GO" id="GO:0003735">
    <property type="term" value="F:structural constituent of ribosome"/>
    <property type="evidence" value="ECO:0007669"/>
    <property type="project" value="InterPro"/>
</dbReference>
<dbReference type="GO" id="GO:0006412">
    <property type="term" value="P:translation"/>
    <property type="evidence" value="ECO:0007669"/>
    <property type="project" value="UniProtKB-UniRule"/>
</dbReference>
<dbReference type="FunFam" id="3.30.420.80:FF:000001">
    <property type="entry name" value="30S ribosomal protein S11"/>
    <property type="match status" value="1"/>
</dbReference>
<dbReference type="Gene3D" id="3.30.420.80">
    <property type="entry name" value="Ribosomal protein S11"/>
    <property type="match status" value="1"/>
</dbReference>
<dbReference type="HAMAP" id="MF_01310">
    <property type="entry name" value="Ribosomal_uS11"/>
    <property type="match status" value="1"/>
</dbReference>
<dbReference type="InterPro" id="IPR001971">
    <property type="entry name" value="Ribosomal_uS11"/>
</dbReference>
<dbReference type="InterPro" id="IPR019981">
    <property type="entry name" value="Ribosomal_uS11_bac-type"/>
</dbReference>
<dbReference type="InterPro" id="IPR018102">
    <property type="entry name" value="Ribosomal_uS11_CS"/>
</dbReference>
<dbReference type="InterPro" id="IPR036967">
    <property type="entry name" value="Ribosomal_uS11_sf"/>
</dbReference>
<dbReference type="NCBIfam" id="NF003698">
    <property type="entry name" value="PRK05309.1"/>
    <property type="match status" value="1"/>
</dbReference>
<dbReference type="NCBIfam" id="TIGR03632">
    <property type="entry name" value="uS11_bact"/>
    <property type="match status" value="1"/>
</dbReference>
<dbReference type="PANTHER" id="PTHR11759">
    <property type="entry name" value="40S RIBOSOMAL PROTEIN S14/30S RIBOSOMAL PROTEIN S11"/>
    <property type="match status" value="1"/>
</dbReference>
<dbReference type="Pfam" id="PF00411">
    <property type="entry name" value="Ribosomal_S11"/>
    <property type="match status" value="1"/>
</dbReference>
<dbReference type="PIRSF" id="PIRSF002131">
    <property type="entry name" value="Ribosomal_S11"/>
    <property type="match status" value="1"/>
</dbReference>
<dbReference type="SUPFAM" id="SSF53137">
    <property type="entry name" value="Translational machinery components"/>
    <property type="match status" value="1"/>
</dbReference>
<dbReference type="PROSITE" id="PS00054">
    <property type="entry name" value="RIBOSOMAL_S11"/>
    <property type="match status" value="1"/>
</dbReference>
<protein>
    <recommendedName>
        <fullName evidence="1">Small ribosomal subunit protein uS11</fullName>
    </recommendedName>
    <alternativeName>
        <fullName evidence="2">30S ribosomal protein S11</fullName>
    </alternativeName>
</protein>